<sequence length="158" mass="18565">MQGRLSAWLVKHGLIHRSLGFDYQGIETLQIKPEDWHSIAVIFYVYGYNYLRSQCAYDVAPGGLLASVYHLTRIEDGVAQPEELCIKVFASRRNPRIPSVFWVWKSVDFQERESYDMLGISYDNHPRLKRILMPESWIGWPLRKDYIAPNFYEIQDAH</sequence>
<evidence type="ECO:0000255" key="1">
    <source>
        <dbReference type="HAMAP-Rule" id="MF_01357"/>
    </source>
</evidence>
<accession>Q2MI97</accession>
<proteinExistence type="inferred from homology"/>
<keyword id="KW-0150">Chloroplast</keyword>
<keyword id="KW-0472">Membrane</keyword>
<keyword id="KW-0520">NAD</keyword>
<keyword id="KW-0521">NADP</keyword>
<keyword id="KW-0934">Plastid</keyword>
<keyword id="KW-0618">Plastoquinone</keyword>
<keyword id="KW-0874">Quinone</keyword>
<keyword id="KW-1185">Reference proteome</keyword>
<keyword id="KW-0793">Thylakoid</keyword>
<keyword id="KW-1278">Translocase</keyword>
<keyword id="KW-0813">Transport</keyword>
<geneLocation type="chloroplast"/>
<organism>
    <name type="scientific">Solanum lycopersicum</name>
    <name type="common">Tomato</name>
    <name type="synonym">Lycopersicon esculentum</name>
    <dbReference type="NCBI Taxonomy" id="4081"/>
    <lineage>
        <taxon>Eukaryota</taxon>
        <taxon>Viridiplantae</taxon>
        <taxon>Streptophyta</taxon>
        <taxon>Embryophyta</taxon>
        <taxon>Tracheophyta</taxon>
        <taxon>Spermatophyta</taxon>
        <taxon>Magnoliopsida</taxon>
        <taxon>eudicotyledons</taxon>
        <taxon>Gunneridae</taxon>
        <taxon>Pentapetalae</taxon>
        <taxon>asterids</taxon>
        <taxon>lamiids</taxon>
        <taxon>Solanales</taxon>
        <taxon>Solanaceae</taxon>
        <taxon>Solanoideae</taxon>
        <taxon>Solaneae</taxon>
        <taxon>Solanum</taxon>
        <taxon>Solanum subgen. Lycopersicon</taxon>
    </lineage>
</organism>
<comment type="function">
    <text evidence="1">NDH shuttles electrons from NAD(P)H:plastoquinone, via FMN and iron-sulfur (Fe-S) centers, to quinones in the photosynthetic chain and possibly in a chloroplast respiratory chain. The immediate electron acceptor for the enzyme in this species is believed to be plastoquinone. Couples the redox reaction to proton translocation, and thus conserves the redox energy in a proton gradient.</text>
</comment>
<comment type="catalytic activity">
    <reaction evidence="1">
        <text>a plastoquinone + NADH + (n+1) H(+)(in) = a plastoquinol + NAD(+) + n H(+)(out)</text>
        <dbReference type="Rhea" id="RHEA:42608"/>
        <dbReference type="Rhea" id="RHEA-COMP:9561"/>
        <dbReference type="Rhea" id="RHEA-COMP:9562"/>
        <dbReference type="ChEBI" id="CHEBI:15378"/>
        <dbReference type="ChEBI" id="CHEBI:17757"/>
        <dbReference type="ChEBI" id="CHEBI:57540"/>
        <dbReference type="ChEBI" id="CHEBI:57945"/>
        <dbReference type="ChEBI" id="CHEBI:62192"/>
    </reaction>
</comment>
<comment type="catalytic activity">
    <reaction evidence="1">
        <text>a plastoquinone + NADPH + (n+1) H(+)(in) = a plastoquinol + NADP(+) + n H(+)(out)</text>
        <dbReference type="Rhea" id="RHEA:42612"/>
        <dbReference type="Rhea" id="RHEA-COMP:9561"/>
        <dbReference type="Rhea" id="RHEA-COMP:9562"/>
        <dbReference type="ChEBI" id="CHEBI:15378"/>
        <dbReference type="ChEBI" id="CHEBI:17757"/>
        <dbReference type="ChEBI" id="CHEBI:57783"/>
        <dbReference type="ChEBI" id="CHEBI:58349"/>
        <dbReference type="ChEBI" id="CHEBI:62192"/>
    </reaction>
</comment>
<comment type="subunit">
    <text evidence="1">NDH is composed of at least 16 different subunits, 5 of which are encoded in the nucleus.</text>
</comment>
<comment type="subcellular location">
    <subcellularLocation>
        <location evidence="1">Plastid</location>
        <location evidence="1">Chloroplast thylakoid membrane</location>
        <topology evidence="1">Peripheral membrane protein</topology>
        <orientation evidence="1">Stromal side</orientation>
    </subcellularLocation>
</comment>
<comment type="similarity">
    <text evidence="1">Belongs to the complex I 30 kDa subunit family.</text>
</comment>
<protein>
    <recommendedName>
        <fullName evidence="1">NAD(P)H-quinone oxidoreductase subunit J, chloroplastic</fullName>
        <ecNumber evidence="1">7.1.1.-</ecNumber>
    </recommendedName>
    <alternativeName>
        <fullName>NAD(P)H dehydrogenase subunit J</fullName>
    </alternativeName>
    <alternativeName>
        <fullName evidence="1">NADH-plastoquinone oxidoreductase subunit J</fullName>
    </alternativeName>
</protein>
<dbReference type="EC" id="7.1.1.-" evidence="1"/>
<dbReference type="EMBL" id="DQ347959">
    <property type="protein sequence ID" value="ABC56303.1"/>
    <property type="molecule type" value="Genomic_DNA"/>
</dbReference>
<dbReference type="EMBL" id="AM087200">
    <property type="protein sequence ID" value="CAJ32396.1"/>
    <property type="molecule type" value="Genomic_DNA"/>
</dbReference>
<dbReference type="RefSeq" id="AP_004931.1">
    <property type="nucleotide sequence ID" value="AC_000188.1"/>
</dbReference>
<dbReference type="RefSeq" id="YP_008563091.1">
    <property type="nucleotide sequence ID" value="NC_007898.3"/>
</dbReference>
<dbReference type="SMR" id="Q2MI97"/>
<dbReference type="FunCoup" id="Q2MI97">
    <property type="interactions" value="34"/>
</dbReference>
<dbReference type="STRING" id="4081.Q2MI97"/>
<dbReference type="PaxDb" id="4081-Solyc01g007290.1.1"/>
<dbReference type="GeneID" id="3950480"/>
<dbReference type="KEGG" id="sly:3950480"/>
<dbReference type="eggNOG" id="KOG1713">
    <property type="taxonomic scope" value="Eukaryota"/>
</dbReference>
<dbReference type="HOGENOM" id="CLU_042628_9_1_1"/>
<dbReference type="InParanoid" id="Q2MI97"/>
<dbReference type="OrthoDB" id="1243565at2759"/>
<dbReference type="PhylomeDB" id="Q2MI97"/>
<dbReference type="Proteomes" id="UP000004994">
    <property type="component" value="Chloroplast"/>
</dbReference>
<dbReference type="ExpressionAtlas" id="Q2MI97">
    <property type="expression patterns" value="baseline"/>
</dbReference>
<dbReference type="GO" id="GO:0009535">
    <property type="term" value="C:chloroplast thylakoid membrane"/>
    <property type="evidence" value="ECO:0007669"/>
    <property type="project" value="UniProtKB-SubCell"/>
</dbReference>
<dbReference type="GO" id="GO:0008137">
    <property type="term" value="F:NADH dehydrogenase (ubiquinone) activity"/>
    <property type="evidence" value="ECO:0007669"/>
    <property type="project" value="InterPro"/>
</dbReference>
<dbReference type="GO" id="GO:0048038">
    <property type="term" value="F:quinone binding"/>
    <property type="evidence" value="ECO:0007669"/>
    <property type="project" value="UniProtKB-KW"/>
</dbReference>
<dbReference type="GO" id="GO:0019684">
    <property type="term" value="P:photosynthesis, light reaction"/>
    <property type="evidence" value="ECO:0007669"/>
    <property type="project" value="UniProtKB-UniRule"/>
</dbReference>
<dbReference type="FunFam" id="3.30.460.80:FF:000004">
    <property type="entry name" value="NAD(P)H-quinone oxidoreductase subunit J, chloroplastic"/>
    <property type="match status" value="1"/>
</dbReference>
<dbReference type="Gene3D" id="3.30.460.80">
    <property type="entry name" value="NADH:ubiquinone oxidoreductase, 30kDa subunit"/>
    <property type="match status" value="1"/>
</dbReference>
<dbReference type="HAMAP" id="MF_01357">
    <property type="entry name" value="NDH1_NuoC"/>
    <property type="match status" value="1"/>
</dbReference>
<dbReference type="InterPro" id="IPR010218">
    <property type="entry name" value="NADH_DH_suC"/>
</dbReference>
<dbReference type="InterPro" id="IPR037232">
    <property type="entry name" value="NADH_quin_OxRdtase_su_C/D-like"/>
</dbReference>
<dbReference type="InterPro" id="IPR001268">
    <property type="entry name" value="NADH_UbQ_OxRdtase_30kDa_su"/>
</dbReference>
<dbReference type="InterPro" id="IPR020396">
    <property type="entry name" value="NADH_UbQ_OxRdtase_CS"/>
</dbReference>
<dbReference type="NCBIfam" id="NF009141">
    <property type="entry name" value="PRK12494.1"/>
    <property type="match status" value="1"/>
</dbReference>
<dbReference type="PANTHER" id="PTHR10884:SF14">
    <property type="entry name" value="NADH DEHYDROGENASE [UBIQUINONE] IRON-SULFUR PROTEIN 3, MITOCHONDRIAL"/>
    <property type="match status" value="1"/>
</dbReference>
<dbReference type="PANTHER" id="PTHR10884">
    <property type="entry name" value="NADH DEHYDROGENASE UBIQUINONE IRON-SULFUR PROTEIN 3"/>
    <property type="match status" value="1"/>
</dbReference>
<dbReference type="Pfam" id="PF00329">
    <property type="entry name" value="Complex1_30kDa"/>
    <property type="match status" value="1"/>
</dbReference>
<dbReference type="SUPFAM" id="SSF143243">
    <property type="entry name" value="Nqo5-like"/>
    <property type="match status" value="1"/>
</dbReference>
<dbReference type="PROSITE" id="PS00542">
    <property type="entry name" value="COMPLEX1_30K"/>
    <property type="match status" value="1"/>
</dbReference>
<feature type="chain" id="PRO_0000277417" description="NAD(P)H-quinone oxidoreductase subunit J, chloroplastic">
    <location>
        <begin position="1"/>
        <end position="158"/>
    </location>
</feature>
<gene>
    <name evidence="1" type="primary">ndhJ</name>
</gene>
<reference key="1">
    <citation type="journal article" date="2006" name="Theor. Appl. Genet.">
        <title>Complete chloroplast genome sequences of Solanum bulbocastanum, Solanum lycopersicum and comparative analyses with other Solanaceae genomes.</title>
        <authorList>
            <person name="Daniell H."/>
            <person name="Lee S.-B."/>
            <person name="Grevich J."/>
            <person name="Saski C."/>
            <person name="Quesada-Vargas T."/>
            <person name="Guda C."/>
            <person name="Tomkins J."/>
            <person name="Jansen R.K."/>
        </authorList>
    </citation>
    <scope>NUCLEOTIDE SEQUENCE [LARGE SCALE GENOMIC DNA]</scope>
    <source>
        <strain>cv. LA3023</strain>
    </source>
</reference>
<reference key="2">
    <citation type="journal article" date="2006" name="J. Mol. Evol.">
        <title>Sequence of the tomato chloroplast DNA and evolutionary comparison of solanaceous plastid genomes.</title>
        <authorList>
            <person name="Kahlau S."/>
            <person name="Aspinall S."/>
            <person name="Gray J.C."/>
            <person name="Bock R."/>
        </authorList>
    </citation>
    <scope>NUCLEOTIDE SEQUENCE [LARGE SCALE GENOMIC DNA]</scope>
    <source>
        <strain>cv. IPA-6</strain>
    </source>
</reference>
<name>NDHJ_SOLLC</name>